<dbReference type="EC" id="1.14.16.2" evidence="4 6"/>
<dbReference type="EMBL" id="M10244">
    <property type="protein sequence ID" value="AAA42257.1"/>
    <property type="molecule type" value="mRNA"/>
</dbReference>
<dbReference type="EMBL" id="L22651">
    <property type="protein sequence ID" value="AAA42258.1"/>
    <property type="molecule type" value="mRNA"/>
</dbReference>
<dbReference type="PIR" id="A00510">
    <property type="entry name" value="WHRTY"/>
</dbReference>
<dbReference type="RefSeq" id="NP_036872.1">
    <property type="nucleotide sequence ID" value="NM_012740.4"/>
</dbReference>
<dbReference type="PDB" id="1TOH">
    <property type="method" value="X-ray"/>
    <property type="resolution" value="2.30 A"/>
    <property type="chains" value="A=156-498"/>
</dbReference>
<dbReference type="PDB" id="2MDA">
    <property type="method" value="NMR"/>
    <property type="chains" value="A/B=65-159"/>
</dbReference>
<dbReference type="PDB" id="2TOH">
    <property type="method" value="X-ray"/>
    <property type="resolution" value="2.30 A"/>
    <property type="chains" value="A=156-498"/>
</dbReference>
<dbReference type="PDBsum" id="1TOH"/>
<dbReference type="PDBsum" id="2MDA"/>
<dbReference type="PDBsum" id="2TOH"/>
<dbReference type="BMRB" id="P04177"/>
<dbReference type="SMR" id="P04177"/>
<dbReference type="BioGRID" id="247158">
    <property type="interactions" value="2"/>
</dbReference>
<dbReference type="CORUM" id="P04177"/>
<dbReference type="FunCoup" id="P04177">
    <property type="interactions" value="85"/>
</dbReference>
<dbReference type="IntAct" id="P04177">
    <property type="interactions" value="3"/>
</dbReference>
<dbReference type="MINT" id="P04177"/>
<dbReference type="STRING" id="10116.ENSRNOP00000027682"/>
<dbReference type="BindingDB" id="P04177"/>
<dbReference type="ChEMBL" id="CHEMBL2462"/>
<dbReference type="GlyGen" id="P04177">
    <property type="glycosylation" value="3 sites, 1 O-linked glycan (1 site)"/>
</dbReference>
<dbReference type="iPTMnet" id="P04177"/>
<dbReference type="PhosphoSitePlus" id="P04177"/>
<dbReference type="jPOST" id="P04177"/>
<dbReference type="PaxDb" id="10116-ENSRNOP00000027682"/>
<dbReference type="Ensembl" id="ENSRNOT00000027682.6">
    <property type="protein sequence ID" value="ENSRNOP00000027682.3"/>
    <property type="gene ID" value="ENSRNOG00000020410.6"/>
</dbReference>
<dbReference type="GeneID" id="25085"/>
<dbReference type="KEGG" id="rno:25085"/>
<dbReference type="UCSC" id="RGD:3853">
    <property type="organism name" value="rat"/>
</dbReference>
<dbReference type="AGR" id="RGD:3853"/>
<dbReference type="CTD" id="7054"/>
<dbReference type="RGD" id="3853">
    <property type="gene designation" value="Th"/>
</dbReference>
<dbReference type="eggNOG" id="KOG3820">
    <property type="taxonomic scope" value="Eukaryota"/>
</dbReference>
<dbReference type="GeneTree" id="ENSGT00950000182885"/>
<dbReference type="HOGENOM" id="CLU_023198_0_1_1"/>
<dbReference type="InParanoid" id="P04177"/>
<dbReference type="OMA" id="SVEHGYP"/>
<dbReference type="OrthoDB" id="983542at2759"/>
<dbReference type="PhylomeDB" id="P04177"/>
<dbReference type="TreeFam" id="TF313327"/>
<dbReference type="BRENDA" id="1.14.16.2">
    <property type="organism ID" value="5301"/>
</dbReference>
<dbReference type="Reactome" id="R-RNO-209905">
    <property type="pathway name" value="Catecholamine biosynthesis"/>
</dbReference>
<dbReference type="SABIO-RK" id="P04177"/>
<dbReference type="UniPathway" id="UPA00747">
    <property type="reaction ID" value="UER00733"/>
</dbReference>
<dbReference type="EvolutionaryTrace" id="P04177"/>
<dbReference type="PRO" id="PR:P04177"/>
<dbReference type="Proteomes" id="UP000002494">
    <property type="component" value="Chromosome 1"/>
</dbReference>
<dbReference type="Bgee" id="ENSRNOG00000020410">
    <property type="expression patterns" value="Expressed in brain and 3 other cell types or tissues"/>
</dbReference>
<dbReference type="GO" id="GO:0030424">
    <property type="term" value="C:axon"/>
    <property type="evidence" value="ECO:0000314"/>
    <property type="project" value="RGD"/>
</dbReference>
<dbReference type="GO" id="GO:0005737">
    <property type="term" value="C:cytoplasm"/>
    <property type="evidence" value="ECO:0000314"/>
    <property type="project" value="UniProtKB"/>
</dbReference>
<dbReference type="GO" id="GO:0009898">
    <property type="term" value="C:cytoplasmic side of plasma membrane"/>
    <property type="evidence" value="ECO:0000266"/>
    <property type="project" value="RGD"/>
</dbReference>
<dbReference type="GO" id="GO:0031410">
    <property type="term" value="C:cytoplasmic vesicle"/>
    <property type="evidence" value="ECO:0000266"/>
    <property type="project" value="RGD"/>
</dbReference>
<dbReference type="GO" id="GO:0030659">
    <property type="term" value="C:cytoplasmic vesicle membrane"/>
    <property type="evidence" value="ECO:0000314"/>
    <property type="project" value="BHF-UCL"/>
</dbReference>
<dbReference type="GO" id="GO:0030425">
    <property type="term" value="C:dendrite"/>
    <property type="evidence" value="ECO:0000314"/>
    <property type="project" value="RGD"/>
</dbReference>
<dbReference type="GO" id="GO:0033162">
    <property type="term" value="C:melanosome membrane"/>
    <property type="evidence" value="ECO:0000266"/>
    <property type="project" value="RGD"/>
</dbReference>
<dbReference type="GO" id="GO:0005739">
    <property type="term" value="C:mitochondrion"/>
    <property type="evidence" value="ECO:0000314"/>
    <property type="project" value="BHF-UCL"/>
</dbReference>
<dbReference type="GO" id="GO:0043005">
    <property type="term" value="C:neuron projection"/>
    <property type="evidence" value="ECO:0000266"/>
    <property type="project" value="RGD"/>
</dbReference>
<dbReference type="GO" id="GO:0043025">
    <property type="term" value="C:neuronal cell body"/>
    <property type="evidence" value="ECO:0000314"/>
    <property type="project" value="RGD"/>
</dbReference>
<dbReference type="GO" id="GO:0005634">
    <property type="term" value="C:nucleus"/>
    <property type="evidence" value="ECO:0000250"/>
    <property type="project" value="UniProtKB"/>
</dbReference>
<dbReference type="GO" id="GO:0043204">
    <property type="term" value="C:perikaryon"/>
    <property type="evidence" value="ECO:0000314"/>
    <property type="project" value="RGD"/>
</dbReference>
<dbReference type="GO" id="GO:0048471">
    <property type="term" value="C:perinuclear region of cytoplasm"/>
    <property type="evidence" value="ECO:0000250"/>
    <property type="project" value="UniProtKB"/>
</dbReference>
<dbReference type="GO" id="GO:0005790">
    <property type="term" value="C:smooth endoplasmic reticulum"/>
    <property type="evidence" value="ECO:0000266"/>
    <property type="project" value="RGD"/>
</dbReference>
<dbReference type="GO" id="GO:0008021">
    <property type="term" value="C:synaptic vesicle"/>
    <property type="evidence" value="ECO:0000314"/>
    <property type="project" value="RGD"/>
</dbReference>
<dbReference type="GO" id="GO:0043195">
    <property type="term" value="C:terminal bouton"/>
    <property type="evidence" value="ECO:0000314"/>
    <property type="project" value="RGD"/>
</dbReference>
<dbReference type="GO" id="GO:0016597">
    <property type="term" value="F:amino acid binding"/>
    <property type="evidence" value="ECO:0000314"/>
    <property type="project" value="RGD"/>
</dbReference>
<dbReference type="GO" id="GO:0035240">
    <property type="term" value="F:dopamine binding"/>
    <property type="evidence" value="ECO:0000353"/>
    <property type="project" value="RGD"/>
</dbReference>
<dbReference type="GO" id="GO:0019899">
    <property type="term" value="F:enzyme binding"/>
    <property type="evidence" value="ECO:0000266"/>
    <property type="project" value="RGD"/>
</dbReference>
<dbReference type="GO" id="GO:0008199">
    <property type="term" value="F:ferric iron binding"/>
    <property type="evidence" value="ECO:0000314"/>
    <property type="project" value="RGD"/>
</dbReference>
<dbReference type="GO" id="GO:0008198">
    <property type="term" value="F:ferrous iron binding"/>
    <property type="evidence" value="ECO:0000314"/>
    <property type="project" value="RGD"/>
</dbReference>
<dbReference type="GO" id="GO:0042802">
    <property type="term" value="F:identical protein binding"/>
    <property type="evidence" value="ECO:0000304"/>
    <property type="project" value="RGD"/>
</dbReference>
<dbReference type="GO" id="GO:0004497">
    <property type="term" value="F:monooxygenase activity"/>
    <property type="evidence" value="ECO:0000314"/>
    <property type="project" value="BHF-UCL"/>
</dbReference>
<dbReference type="GO" id="GO:0019825">
    <property type="term" value="F:oxygen binding"/>
    <property type="evidence" value="ECO:0000314"/>
    <property type="project" value="RGD"/>
</dbReference>
<dbReference type="GO" id="GO:0019904">
    <property type="term" value="F:protein domain specific binding"/>
    <property type="evidence" value="ECO:0000353"/>
    <property type="project" value="RGD"/>
</dbReference>
<dbReference type="GO" id="GO:0036094">
    <property type="term" value="F:small molecule binding"/>
    <property type="evidence" value="ECO:0000314"/>
    <property type="project" value="DisProt"/>
</dbReference>
<dbReference type="GO" id="GO:0034617">
    <property type="term" value="F:tetrahydrobiopterin binding"/>
    <property type="evidence" value="ECO:0000314"/>
    <property type="project" value="RGD"/>
</dbReference>
<dbReference type="GO" id="GO:0004511">
    <property type="term" value="F:tyrosine 3-monooxygenase activity"/>
    <property type="evidence" value="ECO:0000314"/>
    <property type="project" value="RGD"/>
</dbReference>
<dbReference type="GO" id="GO:0015842">
    <property type="term" value="P:aminergic neurotransmitter loading into synaptic vesicle"/>
    <property type="evidence" value="ECO:0000314"/>
    <property type="project" value="RGD"/>
</dbReference>
<dbReference type="GO" id="GO:0009887">
    <property type="term" value="P:animal organ morphogenesis"/>
    <property type="evidence" value="ECO:0000266"/>
    <property type="project" value="RGD"/>
</dbReference>
<dbReference type="GO" id="GO:0042423">
    <property type="term" value="P:catecholamine biosynthetic process"/>
    <property type="evidence" value="ECO:0000314"/>
    <property type="project" value="RGD"/>
</dbReference>
<dbReference type="GO" id="GO:0071312">
    <property type="term" value="P:cellular response to alkaloid"/>
    <property type="evidence" value="ECO:0000270"/>
    <property type="project" value="RGD"/>
</dbReference>
<dbReference type="GO" id="GO:0071333">
    <property type="term" value="P:cellular response to glucose stimulus"/>
    <property type="evidence" value="ECO:0000270"/>
    <property type="project" value="RGD"/>
</dbReference>
<dbReference type="GO" id="GO:0071363">
    <property type="term" value="P:cellular response to growth factor stimulus"/>
    <property type="evidence" value="ECO:0000270"/>
    <property type="project" value="RGD"/>
</dbReference>
<dbReference type="GO" id="GO:0071287">
    <property type="term" value="P:cellular response to manganese ion"/>
    <property type="evidence" value="ECO:0000270"/>
    <property type="project" value="RGD"/>
</dbReference>
<dbReference type="GO" id="GO:0071316">
    <property type="term" value="P:cellular response to nicotine"/>
    <property type="evidence" value="ECO:0000270"/>
    <property type="project" value="RGD"/>
</dbReference>
<dbReference type="GO" id="GO:0071466">
    <property type="term" value="P:cellular response to xenobiotic stimulus"/>
    <property type="evidence" value="ECO:0000270"/>
    <property type="project" value="RGD"/>
</dbReference>
<dbReference type="GO" id="GO:0021987">
    <property type="term" value="P:cerebral cortex development"/>
    <property type="evidence" value="ECO:0000270"/>
    <property type="project" value="RGD"/>
</dbReference>
<dbReference type="GO" id="GO:0042745">
    <property type="term" value="P:circadian sleep/wake cycle"/>
    <property type="evidence" value="ECO:0000270"/>
    <property type="project" value="RGD"/>
</dbReference>
<dbReference type="GO" id="GO:0050890">
    <property type="term" value="P:cognition"/>
    <property type="evidence" value="ECO:0000270"/>
    <property type="project" value="RGD"/>
</dbReference>
<dbReference type="GO" id="GO:0042416">
    <property type="term" value="P:dopamine biosynthetic process"/>
    <property type="evidence" value="ECO:0000266"/>
    <property type="project" value="RGD"/>
</dbReference>
<dbReference type="GO" id="GO:0006585">
    <property type="term" value="P:dopamine biosynthetic process from tyrosine"/>
    <property type="evidence" value="ECO:0000314"/>
    <property type="project" value="RGD"/>
</dbReference>
<dbReference type="GO" id="GO:0042755">
    <property type="term" value="P:eating behavior"/>
    <property type="evidence" value="ECO:0000266"/>
    <property type="project" value="RGD"/>
</dbReference>
<dbReference type="GO" id="GO:0048596">
    <property type="term" value="P:embryonic camera-type eye morphogenesis"/>
    <property type="evidence" value="ECO:0000266"/>
    <property type="project" value="RGD"/>
</dbReference>
<dbReference type="GO" id="GO:0042418">
    <property type="term" value="P:epinephrine biosynthetic process"/>
    <property type="evidence" value="ECO:0000266"/>
    <property type="project" value="RGD"/>
</dbReference>
<dbReference type="GO" id="GO:0042462">
    <property type="term" value="P:eye photoreceptor cell development"/>
    <property type="evidence" value="ECO:0000266"/>
    <property type="project" value="RGD"/>
</dbReference>
<dbReference type="GO" id="GO:0006631">
    <property type="term" value="P:fatty acid metabolic process"/>
    <property type="evidence" value="ECO:0000270"/>
    <property type="project" value="RGD"/>
</dbReference>
<dbReference type="GO" id="GO:0016137">
    <property type="term" value="P:glycoside metabolic process"/>
    <property type="evidence" value="ECO:0000270"/>
    <property type="project" value="RGD"/>
</dbReference>
<dbReference type="GO" id="GO:0007507">
    <property type="term" value="P:heart development"/>
    <property type="evidence" value="ECO:0000314"/>
    <property type="project" value="RGD"/>
</dbReference>
<dbReference type="GO" id="GO:1990384">
    <property type="term" value="P:hyaloid vascular plexus regression"/>
    <property type="evidence" value="ECO:0000250"/>
    <property type="project" value="UniProtKB"/>
</dbReference>
<dbReference type="GO" id="GO:0033076">
    <property type="term" value="P:isoquinoline alkaloid metabolic process"/>
    <property type="evidence" value="ECO:0000270"/>
    <property type="project" value="RGD"/>
</dbReference>
<dbReference type="GO" id="GO:0007612">
    <property type="term" value="P:learning"/>
    <property type="evidence" value="ECO:0000266"/>
    <property type="project" value="RGD"/>
</dbReference>
<dbReference type="GO" id="GO:0007626">
    <property type="term" value="P:locomotory behavior"/>
    <property type="evidence" value="ECO:0000266"/>
    <property type="project" value="RGD"/>
</dbReference>
<dbReference type="GO" id="GO:0007617">
    <property type="term" value="P:mating behavior"/>
    <property type="evidence" value="ECO:0000266"/>
    <property type="project" value="RGD"/>
</dbReference>
<dbReference type="GO" id="GO:0007613">
    <property type="term" value="P:memory"/>
    <property type="evidence" value="ECO:0000266"/>
    <property type="project" value="RGD"/>
</dbReference>
<dbReference type="GO" id="GO:0042421">
    <property type="term" value="P:norepinephrine biosynthetic process"/>
    <property type="evidence" value="ECO:0000266"/>
    <property type="project" value="RGD"/>
</dbReference>
<dbReference type="GO" id="GO:0018963">
    <property type="term" value="P:phthalate metabolic process"/>
    <property type="evidence" value="ECO:0000270"/>
    <property type="project" value="RGD"/>
</dbReference>
<dbReference type="GO" id="GO:0052314">
    <property type="term" value="P:phytoalexin metabolic process"/>
    <property type="evidence" value="ECO:0000270"/>
    <property type="project" value="RGD"/>
</dbReference>
<dbReference type="GO" id="GO:0008016">
    <property type="term" value="P:regulation of heart contraction"/>
    <property type="evidence" value="ECO:0000266"/>
    <property type="project" value="RGD"/>
</dbReference>
<dbReference type="GO" id="GO:0014823">
    <property type="term" value="P:response to activity"/>
    <property type="evidence" value="ECO:0000270"/>
    <property type="project" value="RGD"/>
</dbReference>
<dbReference type="GO" id="GO:0001975">
    <property type="term" value="P:response to amphetamine"/>
    <property type="evidence" value="ECO:0000270"/>
    <property type="project" value="RGD"/>
</dbReference>
<dbReference type="GO" id="GO:0051412">
    <property type="term" value="P:response to corticosterone"/>
    <property type="evidence" value="ECO:0000270"/>
    <property type="project" value="RGD"/>
</dbReference>
<dbReference type="GO" id="GO:1904643">
    <property type="term" value="P:response to curcumin"/>
    <property type="evidence" value="ECO:0000270"/>
    <property type="project" value="RGD"/>
</dbReference>
<dbReference type="GO" id="GO:0051602">
    <property type="term" value="P:response to electrical stimulus"/>
    <property type="evidence" value="ECO:0000270"/>
    <property type="project" value="RGD"/>
</dbReference>
<dbReference type="GO" id="GO:0032355">
    <property type="term" value="P:response to estradiol"/>
    <property type="evidence" value="ECO:0000270"/>
    <property type="project" value="RGD"/>
</dbReference>
<dbReference type="GO" id="GO:0045471">
    <property type="term" value="P:response to ethanol"/>
    <property type="evidence" value="ECO:0000270"/>
    <property type="project" value="RGD"/>
</dbReference>
<dbReference type="GO" id="GO:0045472">
    <property type="term" value="P:response to ether"/>
    <property type="evidence" value="ECO:0000270"/>
    <property type="project" value="RGD"/>
</dbReference>
<dbReference type="GO" id="GO:0070848">
    <property type="term" value="P:response to growth factor"/>
    <property type="evidence" value="ECO:0000270"/>
    <property type="project" value="RGD"/>
</dbReference>
<dbReference type="GO" id="GO:0009635">
    <property type="term" value="P:response to herbicide"/>
    <property type="evidence" value="ECO:0000270"/>
    <property type="project" value="RGD"/>
</dbReference>
<dbReference type="GO" id="GO:0001666">
    <property type="term" value="P:response to hypoxia"/>
    <property type="evidence" value="ECO:0000314"/>
    <property type="project" value="RGD"/>
</dbReference>
<dbReference type="GO" id="GO:0035902">
    <property type="term" value="P:response to immobilization stress"/>
    <property type="evidence" value="ECO:0000270"/>
    <property type="project" value="RGD"/>
</dbReference>
<dbReference type="GO" id="GO:0017085">
    <property type="term" value="P:response to insecticide"/>
    <property type="evidence" value="ECO:0000270"/>
    <property type="project" value="RGD"/>
</dbReference>
<dbReference type="GO" id="GO:0035900">
    <property type="term" value="P:response to isolation stress"/>
    <property type="evidence" value="ECO:0000270"/>
    <property type="project" value="RGD"/>
</dbReference>
<dbReference type="GO" id="GO:0009416">
    <property type="term" value="P:response to light stimulus"/>
    <property type="evidence" value="ECO:0000270"/>
    <property type="project" value="RGD"/>
</dbReference>
<dbReference type="GO" id="GO:0032496">
    <property type="term" value="P:response to lipopolysaccharide"/>
    <property type="evidence" value="ECO:0000270"/>
    <property type="project" value="RGD"/>
</dbReference>
<dbReference type="GO" id="GO:0010038">
    <property type="term" value="P:response to metal ion"/>
    <property type="evidence" value="ECO:0000270"/>
    <property type="project" value="RGD"/>
</dbReference>
<dbReference type="GO" id="GO:0035094">
    <property type="term" value="P:response to nicotine"/>
    <property type="evidence" value="ECO:0000270"/>
    <property type="project" value="RGD"/>
</dbReference>
<dbReference type="GO" id="GO:0031667">
    <property type="term" value="P:response to nutrient levels"/>
    <property type="evidence" value="ECO:0000270"/>
    <property type="project" value="RGD"/>
</dbReference>
<dbReference type="GO" id="GO:0043434">
    <property type="term" value="P:response to peptide hormone"/>
    <property type="evidence" value="ECO:0000270"/>
    <property type="project" value="RGD"/>
</dbReference>
<dbReference type="GO" id="GO:0046684">
    <property type="term" value="P:response to pyrethroid"/>
    <property type="evidence" value="ECO:0000270"/>
    <property type="project" value="RGD"/>
</dbReference>
<dbReference type="GO" id="GO:0009651">
    <property type="term" value="P:response to salt stress"/>
    <property type="evidence" value="ECO:0000270"/>
    <property type="project" value="RGD"/>
</dbReference>
<dbReference type="GO" id="GO:0048545">
    <property type="term" value="P:response to steroid hormone"/>
    <property type="evidence" value="ECO:0000270"/>
    <property type="project" value="RGD"/>
</dbReference>
<dbReference type="GO" id="GO:0009410">
    <property type="term" value="P:response to xenobiotic stimulus"/>
    <property type="evidence" value="ECO:0000270"/>
    <property type="project" value="RGD"/>
</dbReference>
<dbReference type="GO" id="GO:0010043">
    <property type="term" value="P:response to zinc ion"/>
    <property type="evidence" value="ECO:0000270"/>
    <property type="project" value="RGD"/>
</dbReference>
<dbReference type="GO" id="GO:0035176">
    <property type="term" value="P:social behavior"/>
    <property type="evidence" value="ECO:0000270"/>
    <property type="project" value="RGD"/>
</dbReference>
<dbReference type="GO" id="GO:0006665">
    <property type="term" value="P:sphingolipid metabolic process"/>
    <property type="evidence" value="ECO:0000270"/>
    <property type="project" value="RGD"/>
</dbReference>
<dbReference type="GO" id="GO:0001963">
    <property type="term" value="P:synaptic transmission, dopaminergic"/>
    <property type="evidence" value="ECO:0000266"/>
    <property type="project" value="RGD"/>
</dbReference>
<dbReference type="GO" id="GO:0042214">
    <property type="term" value="P:terpene metabolic process"/>
    <property type="evidence" value="ECO:0000270"/>
    <property type="project" value="RGD"/>
</dbReference>
<dbReference type="GO" id="GO:0007601">
    <property type="term" value="P:visual perception"/>
    <property type="evidence" value="ECO:0000266"/>
    <property type="project" value="RGD"/>
</dbReference>
<dbReference type="CDD" id="cd04930">
    <property type="entry name" value="ACT_TH"/>
    <property type="match status" value="1"/>
</dbReference>
<dbReference type="CDD" id="cd03345">
    <property type="entry name" value="eu_TyrOH"/>
    <property type="match status" value="1"/>
</dbReference>
<dbReference type="DisProt" id="DP00094"/>
<dbReference type="FunFam" id="1.10.800.10:FF:000002">
    <property type="entry name" value="Tyrosine 3-monooxygenase"/>
    <property type="match status" value="1"/>
</dbReference>
<dbReference type="FunFam" id="3.30.70.260:FF:000024">
    <property type="entry name" value="Tyrosine 3-monooxygenase"/>
    <property type="match status" value="1"/>
</dbReference>
<dbReference type="Gene3D" id="3.30.70.260">
    <property type="match status" value="1"/>
</dbReference>
<dbReference type="Gene3D" id="1.10.800.10">
    <property type="entry name" value="Aromatic amino acid hydroxylase"/>
    <property type="match status" value="1"/>
</dbReference>
<dbReference type="InterPro" id="IPR045865">
    <property type="entry name" value="ACT-like_dom_sf"/>
</dbReference>
<dbReference type="InterPro" id="IPR001273">
    <property type="entry name" value="ArAA_hydroxylase"/>
</dbReference>
<dbReference type="InterPro" id="IPR018301">
    <property type="entry name" value="ArAA_hydroxylase_Fe/CU_BS"/>
</dbReference>
<dbReference type="InterPro" id="IPR036951">
    <property type="entry name" value="ArAA_hydroxylase_sf"/>
</dbReference>
<dbReference type="InterPro" id="IPR036329">
    <property type="entry name" value="Aro-AA_hydroxylase_C_sf"/>
</dbReference>
<dbReference type="InterPro" id="IPR019774">
    <property type="entry name" value="Aromatic-AA_hydroxylase_C"/>
</dbReference>
<dbReference type="InterPro" id="IPR041903">
    <property type="entry name" value="Eu_TyrOH_cat"/>
</dbReference>
<dbReference type="InterPro" id="IPR049321">
    <property type="entry name" value="TH_ACT"/>
</dbReference>
<dbReference type="InterPro" id="IPR005962">
    <property type="entry name" value="Tyr_3_mOase"/>
</dbReference>
<dbReference type="InterPro" id="IPR019773">
    <property type="entry name" value="Tyrosine_3-monooxygenase-like"/>
</dbReference>
<dbReference type="InterPro" id="IPR021164">
    <property type="entry name" value="Tyrosine_hydroxylase_CS"/>
</dbReference>
<dbReference type="NCBIfam" id="TIGR01269">
    <property type="entry name" value="Tyr_3_monoox"/>
    <property type="match status" value="1"/>
</dbReference>
<dbReference type="PANTHER" id="PTHR11473">
    <property type="entry name" value="AROMATIC AMINO ACID HYDROXYLASE"/>
    <property type="match status" value="1"/>
</dbReference>
<dbReference type="PANTHER" id="PTHR11473:SF18">
    <property type="entry name" value="TYROSINE 3-MONOOXYGENASE"/>
    <property type="match status" value="1"/>
</dbReference>
<dbReference type="Pfam" id="PF00351">
    <property type="entry name" value="Biopterin_H"/>
    <property type="match status" value="1"/>
</dbReference>
<dbReference type="Pfam" id="PF21417">
    <property type="entry name" value="TH_ACT"/>
    <property type="match status" value="1"/>
</dbReference>
<dbReference type="Pfam" id="PF12549">
    <property type="entry name" value="TOH_N"/>
    <property type="match status" value="2"/>
</dbReference>
<dbReference type="PIRSF" id="PIRSF000336">
    <property type="entry name" value="TH"/>
    <property type="match status" value="1"/>
</dbReference>
<dbReference type="PRINTS" id="PR00372">
    <property type="entry name" value="FYWHYDRXLASE"/>
</dbReference>
<dbReference type="SUPFAM" id="SSF55021">
    <property type="entry name" value="ACT-like"/>
    <property type="match status" value="1"/>
</dbReference>
<dbReference type="SUPFAM" id="SSF56534">
    <property type="entry name" value="Aromatic aminoacid monoxygenases, catalytic and oligomerization domains"/>
    <property type="match status" value="1"/>
</dbReference>
<dbReference type="PROSITE" id="PS00367">
    <property type="entry name" value="BH4_AAA_HYDROXYL_1"/>
    <property type="match status" value="1"/>
</dbReference>
<dbReference type="PROSITE" id="PS51410">
    <property type="entry name" value="BH4_AAA_HYDROXYL_2"/>
    <property type="match status" value="1"/>
</dbReference>
<reference key="1">
    <citation type="journal article" date="1985" name="Proc. Natl. Acad. Sci. U.S.A.">
        <title>Complete coding sequence of rat tyrosine hydroxylase mRNA.</title>
        <authorList>
            <person name="Grima B."/>
            <person name="Lamouroux A."/>
            <person name="Blanot F."/>
            <person name="Faucon Biguet N."/>
            <person name="Mallet J."/>
        </authorList>
    </citation>
    <scope>NUCLEOTIDE SEQUENCE [MRNA]</scope>
</reference>
<reference key="2">
    <citation type="submission" date="1993-07" db="EMBL/GenBank/DDBJ databases">
        <authorList>
            <person name="Anton X.X."/>
            <person name="Manaster J.S."/>
            <person name="Kordower X.X."/>
            <person name="Markham X.X."/>
            <person name="Bredesen D.E."/>
        </authorList>
    </citation>
    <scope>NUCLEOTIDE SEQUENCE [MRNA]</scope>
</reference>
<reference key="3">
    <citation type="submission" date="2006-08" db="UniProtKB">
        <authorList>
            <person name="Bienvenut W.V."/>
            <person name="von Kriegsheim A.F."/>
            <person name="Kolch W."/>
        </authorList>
    </citation>
    <scope>PROTEIN SEQUENCE OF 2-12; 284-298 AND 452-459</scope>
    <scope>CLEAVAGE OF INITIATOR METHIONINE</scope>
    <scope>IDENTIFICATION BY MASS SPECTROMETRY</scope>
    <source>
        <tissue>Pheochromocytoma</tissue>
    </source>
</reference>
<reference key="4">
    <citation type="journal article" date="1991" name="J. Biol. Chem.">
        <title>Tyrosine hydroxylase in rat brain dopaminergic nerve terminals. Multiple-site phosphorylation in vivo and in synaptosomes.</title>
        <authorList>
            <person name="Haycock J.W."/>
            <person name="Haycock D.A."/>
        </authorList>
    </citation>
    <scope>PHOSPHORYLATION AT SER-19; SER-31 AND SER-40</scope>
</reference>
<reference key="5">
    <citation type="journal article" date="2001" name="J. Biol. Chem.">
        <title>Phosphorylation of Ser(19) alters the conformation of tyrosine hydroxylase to increase the rate of phosphorylation of Ser(40).</title>
        <authorList>
            <person name="Bevilaqua L.R."/>
            <person name="Graham M.E."/>
            <person name="Dunkley P.R."/>
            <person name="von Nagy-Felsobuki E.I."/>
            <person name="Dickson P.W."/>
        </authorList>
    </citation>
    <scope>PHOSPHORYLATION AT SER-19 AND SER-40</scope>
    <scope>IDENTIFICATION BY MASS SPECTROMETRY</scope>
</reference>
<reference key="6">
    <citation type="journal article" date="1997" name="Nat. Struct. Biol.">
        <title>Crystal structure of tyrosine hydroxylase at 2.3 A and its implications for inherited neurodegenerative diseases.</title>
        <authorList>
            <person name="Goodwill K.E."/>
            <person name="Sabatier C."/>
            <person name="Marks C."/>
            <person name="Raag R."/>
            <person name="Fitzpatrick P.F."/>
            <person name="Stevens R.C."/>
        </authorList>
    </citation>
    <scope>X-RAY CRYSTALLOGRAPHY (2.30 ANGSTROMS) OF 156-498 IN COMPLEX WITH IRON</scope>
    <scope>SUBUNIT</scope>
</reference>
<reference key="7">
    <citation type="journal article" date="2000" name="Biochemistry">
        <title>Reversing the substrate specificities of phenylalanine and tyrosine hydroxylase: aspartate 425 of tyrosine hydroxylase is essential for L-DOPA formation.</title>
        <authorList>
            <person name="Daubner S.C."/>
            <person name="Melendez J."/>
            <person name="Fitzpatrick P.F."/>
        </authorList>
    </citation>
    <scope>FUNCTION</scope>
    <scope>CATALYTIC ACTIVITY</scope>
    <scope>BIOPHYSICOCHEMICAL PROPERTIES</scope>
    <scope>MUTAGENESIS OF GLN-310; HIS-323 AND ASP-425</scope>
    <scope>SUBSTRATE SPECIFICITY</scope>
</reference>
<reference key="8">
    <citation type="journal article" date="2002" name="Biochem. Biophys. Res. Commun.">
        <title>Role of tryptophan hydroxylase phe313 in determining substrate specificity.</title>
        <authorList>
            <person name="Daubner S.C."/>
            <person name="Moran G.R."/>
            <person name="Fitzpatrick P.F."/>
        </authorList>
    </citation>
    <scope>CATALYTIC ACTIVITY</scope>
    <scope>FUNCTION</scope>
    <scope>MUTAGENESIS OF TRP-372</scope>
    <scope>BIOPHYSICOCHEMICAL PROPERTIES</scope>
</reference>
<reference key="9">
    <citation type="journal article" date="2004" name="J. Biochem.">
        <title>Isoosmotic isolation of rat brain synaptic vesicles, some of which contain tyrosine hydroxylase.</title>
        <authorList>
            <person name="Tsudzuki T."/>
            <person name="Tsujita M."/>
        </authorList>
    </citation>
    <scope>SUBCELLULAR LOCATION</scope>
</reference>
<reference key="10">
    <citation type="journal article" date="2011" name="Biochem. Biophys. Res. Commun.">
        <title>Phosphorylation of the N-terminal portion of tyrosine hydroxylase triggers proteasomal digestion of the enzyme.</title>
        <authorList>
            <person name="Nakashima A."/>
            <person name="Mori K."/>
            <person name="Kaneko Y.S."/>
            <person name="Hayashi N."/>
            <person name="Nagatsu T."/>
            <person name="Ota A."/>
        </authorList>
    </citation>
    <scope>SUBCELLULAR LOCATION</scope>
    <scope>PHOSPHORYLATION AT SER-19; SER-31 AND SER-40</scope>
</reference>
<reference key="11">
    <citation type="journal article" date="2019" name="Biochem. Biophys. Res. Commun.">
        <title>Identification by nano-LC-MS/MS of NT5DC2 as a protein binding to tyrosine hydroxylase: Down-regulation of NT5DC2 by siRNA increases catecholamine synthesis in PC12D cells.</title>
        <authorList>
            <person name="Nakashima A."/>
            <person name="Yamaguchi H."/>
            <person name="Kodani Y."/>
            <person name="Kaneko Y.S."/>
            <person name="Kawata M."/>
            <person name="Nagasaki H."/>
            <person name="Nagatsu T."/>
            <person name="Ota A."/>
        </authorList>
    </citation>
    <scope>INTERACTION WITH NT5DC2</scope>
</reference>
<reference key="12">
    <citation type="journal article" date="2020" name="J. Neural Transm.">
        <title>NT5DC2 affects the phosphorylation of tyrosine hydroxylase regulating its catalytic activity.</title>
        <authorList>
            <person name="Nakashima A."/>
            <person name="Yamaguchi H."/>
            <person name="Kondo M."/>
            <person name="Furumura T."/>
            <person name="Kodani Y."/>
            <person name="Kaneko Y.S."/>
            <person name="Kawata M."/>
            <person name="Nagasaki H."/>
            <person name="Nagatsu T."/>
            <person name="Ota A."/>
        </authorList>
    </citation>
    <scope>SUBCELLULAR LOCATION</scope>
    <scope>PHOSPHORYLATION AT SER-19; SER-31 AND SER-40</scope>
</reference>
<reference key="13">
    <citation type="journal article" date="2024" name="Biochem. Biophys. Res. Commun.">
        <title>Role of NT5DC2 in tyrosine hydroxylase phosphorylation based on the analysis of NT5DC2-binding proteins.</title>
        <authorList>
            <person name="Yamaguchi H."/>
            <person name="Hara S."/>
            <person name="Ichinose H."/>
            <person name="Nagasaki H."/>
            <person name="Nakashima A."/>
        </authorList>
    </citation>
    <scope>INTERACTION WITH NT5DC2</scope>
    <scope>PHOSPHORYLATION AT SER-19; SER-31 AND SER-40</scope>
</reference>
<reference key="14">
    <citation type="journal article" date="1998" name="Biochemistry">
        <title>Crystal structure of tyrosine hydroxylase with bound cofactor analogue and iron at 2.3 A resolution: self-hydroxylation of Phe300 and the pterin-binding site.</title>
        <authorList>
            <person name="Goodwill K.E."/>
            <person name="Sabatier C."/>
            <person name="Stevens R.C."/>
        </authorList>
    </citation>
    <scope>X-RAY CRYSTALLOGRAPHY (2.30 ANGSTROMS) OF 156-498 IN COMPLEX WITH IRON</scope>
</reference>
<reference evidence="19" key="15">
    <citation type="journal article" date="2014" name="J. Mol. Biol.">
        <title>The solution structure of the regulatory domain of tyrosine hydroxylase.</title>
        <authorList>
            <person name="Zhang S."/>
            <person name="Huang T."/>
            <person name="Ilangovan U."/>
            <person name="Hinck A.P."/>
            <person name="Fitzpatrick P.F."/>
        </authorList>
    </citation>
    <scope>STRUCTURE BY NMR OF 65-159</scope>
</reference>
<protein>
    <recommendedName>
        <fullName>Tyrosine 3-monooxygenase</fullName>
        <ecNumber evidence="4 6">1.14.16.2</ecNumber>
    </recommendedName>
    <alternativeName>
        <fullName>Tyrosine 3-hydroxylase</fullName>
        <shortName>TH</shortName>
    </alternativeName>
</protein>
<sequence length="498" mass="55966">MPTPSAPSPQPKGFRRAVSEQDAKQAEAVTSPRFIGRRQSLIEDARKEREAAAAAAAAAVASSEPGNPLEAVVFEERDGNAVLNLLFSLRGTKPSSLSRAVKVFETFEAKIHHLETRPAQRPLAGSPHLEYFVRFEVPSGDLAALLSSVRRVSDDVRSAREDKVPWFPRKVSELDKCHHLVTKFDPDLDLDHPGFSDQVYRQRRKLIAEIAFQYKHGEPIPHVEYTAEEIATWKEVYVTLKGLYATHACREHLEGFQLLERYCGYREDSIPQLEDVSRFLKERTGFQLRPVAGLLSARDFLASLAFRVFQCTQYIRHASSPMHSPEPDCCHELLGHVPMLADRTFAQFSQDIGLASLGASDEEIEKLSTVYWFTVEFGLCKQNGELKAYGAGLLSSYGELLHSLSEEPEVRAFDPDTAAVQPYQDQTYQPVYFVSESFNDAKDKLRNYASRIQRPFSVKFDPYTLAIDVLDSPHTIQRSLEGVQDELHTLAHALSAIS</sequence>
<keyword id="KW-0002">3D-structure</keyword>
<keyword id="KW-0127">Catecholamine biosynthesis</keyword>
<keyword id="KW-0966">Cell projection</keyword>
<keyword id="KW-0963">Cytoplasm</keyword>
<keyword id="KW-0968">Cytoplasmic vesicle</keyword>
<keyword id="KW-0903">Direct protein sequencing</keyword>
<keyword id="KW-0408">Iron</keyword>
<keyword id="KW-0479">Metal-binding</keyword>
<keyword id="KW-0503">Monooxygenase</keyword>
<keyword id="KW-0530">Neurotransmitter biosynthesis</keyword>
<keyword id="KW-0539">Nucleus</keyword>
<keyword id="KW-0560">Oxidoreductase</keyword>
<keyword id="KW-0597">Phosphoprotein</keyword>
<keyword id="KW-1185">Reference proteome</keyword>
<keyword id="KW-0770">Synapse</keyword>
<comment type="function">
    <text evidence="1 2 4 6">Catalyzes the conversion of L-tyrosine to L-dihydroxyphenylalanine (L-Dopa), the rate-limiting step in the biosynthesis of catecholamines, dopamine, noradrenaline, and adrenaline. Uses tetrahydrobiopterin and molecular oxygen to convert tyrosine to L-Dopa (By similarity). In addition to tyrosine, is able to catalyze the hydroxylation of phenylalanine and tryptophan but with lower specificity (PubMed:10933781, PubMed:11922614). Positively regulates the regression of retinal hyaloid vessels during postnatal development (By similarity).</text>
</comment>
<comment type="catalytic activity">
    <reaction evidence="4 6">
        <text>(6R)-L-erythro-5,6,7,8-tetrahydrobiopterin + L-tyrosine + O2 = (4aS,6R)-4a-hydroxy-L-erythro-5,6,7,8-tetrahydrobiopterin + L-dopa</text>
        <dbReference type="Rhea" id="RHEA:18201"/>
        <dbReference type="ChEBI" id="CHEBI:15379"/>
        <dbReference type="ChEBI" id="CHEBI:15642"/>
        <dbReference type="ChEBI" id="CHEBI:57504"/>
        <dbReference type="ChEBI" id="CHEBI:58315"/>
        <dbReference type="ChEBI" id="CHEBI:59560"/>
        <dbReference type="EC" id="1.14.16.2"/>
    </reaction>
    <physiologicalReaction direction="left-to-right" evidence="17">
        <dbReference type="Rhea" id="RHEA:18202"/>
    </physiologicalReaction>
</comment>
<comment type="cofactor">
    <cofactor evidence="13">
        <name>Fe(2+)</name>
        <dbReference type="ChEBI" id="CHEBI:29033"/>
    </cofactor>
</comment>
<comment type="activity regulation">
    <text evidence="1">Inhibited in feedback fashion by the catecholamine neurotransmitters, especially by dopamine in competition with tetrahydrobiopterin. Phosphorylation of several Ser/Thr residues in the N-terminus regulates the catalytic activity. Ser-31 and Ser-40 are readily phosphorylated to activate the catalytic activity. A cysteine modification induced by N-ethylmaleimide (NEM), inhibits tyrosine 3-monooxygenase activity through the modification of the Cys-177.</text>
</comment>
<comment type="biophysicochemical properties">
    <kinetics>
        <KM evidence="4">96 uM for phenylalanine</KM>
        <KM evidence="6">210 uM for tryptophan</KM>
        <KM evidence="4">16 uM for tyrosine</KM>
    </kinetics>
</comment>
<comment type="pathway">
    <text evidence="1">Catecholamine biosynthesis; dopamine biosynthesis; dopamine from L-tyrosine: step 1/2.</text>
</comment>
<comment type="subunit">
    <text evidence="1 10 12 13">Homotetramer (PubMed:9228951). Interacts (when phosphorylated at Ser-19) with YWHAG; one YWHAG dimer binds to one TH tetramer and this interaction may influence the phosphorylation and dephosphorylation of other sites (By similarity). Interacts with NT5DC2; the interaction results in reduced phosphorylation and decreased catalytic activity of TH (PubMed:31279527, PubMed:38382359).</text>
</comment>
<comment type="subcellular location">
    <subcellularLocation>
        <location evidence="2">Cytoplasm</location>
        <location evidence="2">Perinuclear region</location>
    </subcellularLocation>
    <subcellularLocation>
        <location evidence="9 11">Nucleus</location>
    </subcellularLocation>
    <subcellularLocation>
        <location evidence="2">Cell projection</location>
        <location evidence="2">Axon</location>
    </subcellularLocation>
    <subcellularLocation>
        <location evidence="7 9 11">Cytoplasm</location>
    </subcellularLocation>
    <subcellularLocation>
        <location evidence="7">Cytoplasmic vesicle</location>
        <location evidence="7">Secretory vesicle</location>
        <location evidence="7">Synaptic vesicle</location>
    </subcellularLocation>
    <text evidence="1 9">When phosphorylated at Ser-19 shows a nuclear distribution and when phosphorylated at Ser-31 as well as at Ser-40 shows a cytosolic distribution (PubMed:21392500, PubMed:32778969). Expressed in dopaminergic axons and axon terminals (By similarity).</text>
</comment>
<comment type="PTM">
    <text evidence="1 5 8 9">Phosphorylated on Ser-19, Ser-31 and Ser-40 by several protein kinases with different site specificities. Phosphorylation at Ser-31 and Ser-40 leads to an increase of TH activity. Phosphorylation at Ser-40 activates the enzyme and also counteracts the feedback inhibition of TH by catecholamines (By similarity). Phosphorylation of Ser-19 and Ser-31 triggers the proteasomal degradation of TH through the ubiquitin-proteasome pathway (PubMed:21392500). Phosphorylation at Ser-31 facilitates transport of TH from the soma to the nerve terminals via the microtubule network (By similarity). Phosphorylation at Ser-19 induces the high-affinity binding to the 14-3-3 protein YWHAG; this interaction may influence the phosphorylation and dephosphorylation of other sites (By similarity). Ser-19 increases the phosphorylation at Ser-40 in a hierarchical manner, leading to increased activity (PubMed:11502746, PubMed:1672315).</text>
</comment>
<comment type="similarity">
    <text evidence="16">Belongs to the biopterin-dependent aromatic amino acid hydroxylase family.</text>
</comment>
<gene>
    <name type="primary">Th</name>
</gene>
<name>TY3H_RAT</name>
<evidence type="ECO:0000250" key="1">
    <source>
        <dbReference type="UniProtKB" id="P07101"/>
    </source>
</evidence>
<evidence type="ECO:0000250" key="2">
    <source>
        <dbReference type="UniProtKB" id="P24529"/>
    </source>
</evidence>
<evidence type="ECO:0000256" key="3">
    <source>
        <dbReference type="SAM" id="MobiDB-lite"/>
    </source>
</evidence>
<evidence type="ECO:0000269" key="4">
    <source>
    </source>
</evidence>
<evidence type="ECO:0000269" key="5">
    <source>
    </source>
</evidence>
<evidence type="ECO:0000269" key="6">
    <source>
    </source>
</evidence>
<evidence type="ECO:0000269" key="7">
    <source>
    </source>
</evidence>
<evidence type="ECO:0000269" key="8">
    <source>
    </source>
</evidence>
<evidence type="ECO:0000269" key="9">
    <source>
    </source>
</evidence>
<evidence type="ECO:0000269" key="10">
    <source>
    </source>
</evidence>
<evidence type="ECO:0000269" key="11">
    <source>
    </source>
</evidence>
<evidence type="ECO:0000269" key="12">
    <source>
    </source>
</evidence>
<evidence type="ECO:0000269" key="13">
    <source>
    </source>
</evidence>
<evidence type="ECO:0000269" key="14">
    <source>
    </source>
</evidence>
<evidence type="ECO:0000269" key="15">
    <source ref="3"/>
</evidence>
<evidence type="ECO:0000305" key="16"/>
<evidence type="ECO:0000305" key="17">
    <source>
    </source>
</evidence>
<evidence type="ECO:0007744" key="18">
    <source>
        <dbReference type="PDB" id="1TOH"/>
    </source>
</evidence>
<evidence type="ECO:0007744" key="19">
    <source>
        <dbReference type="PDB" id="2MDA"/>
    </source>
</evidence>
<evidence type="ECO:0007744" key="20">
    <source>
        <dbReference type="PDB" id="2TOH"/>
    </source>
</evidence>
<evidence type="ECO:0007829" key="21">
    <source>
        <dbReference type="PDB" id="1TOH"/>
    </source>
</evidence>
<evidence type="ECO:0007829" key="22">
    <source>
        <dbReference type="PDB" id="2MDA"/>
    </source>
</evidence>
<evidence type="ECO:0007829" key="23">
    <source>
        <dbReference type="PDB" id="2TOH"/>
    </source>
</evidence>
<feature type="initiator methionine" description="Removed" evidence="15">
    <location>
        <position position="1"/>
    </location>
</feature>
<feature type="chain" id="PRO_0000205564" description="Tyrosine 3-monooxygenase">
    <location>
        <begin position="2"/>
        <end position="498"/>
    </location>
</feature>
<feature type="region of interest" description="Disordered" evidence="3">
    <location>
        <begin position="1"/>
        <end position="31"/>
    </location>
</feature>
<feature type="compositionally biased region" description="Pro residues" evidence="3">
    <location>
        <begin position="1"/>
        <end position="10"/>
    </location>
</feature>
<feature type="binding site" evidence="13 14 18 20">
    <location>
        <position position="331"/>
    </location>
    <ligand>
        <name>Fe cation</name>
        <dbReference type="ChEBI" id="CHEBI:24875"/>
    </ligand>
</feature>
<feature type="binding site" evidence="13 14 18 20">
    <location>
        <position position="336"/>
    </location>
    <ligand>
        <name>Fe cation</name>
        <dbReference type="ChEBI" id="CHEBI:24875"/>
    </ligand>
</feature>
<feature type="binding site" evidence="13 14 18 20">
    <location>
        <position position="376"/>
    </location>
    <ligand>
        <name>Fe cation</name>
        <dbReference type="ChEBI" id="CHEBI:24875"/>
    </ligand>
</feature>
<feature type="site" description="Important for substrate specificity" evidence="4">
    <location>
        <position position="425"/>
    </location>
</feature>
<feature type="modified residue" description="Phosphoserine; by CaMK2" evidence="5 8 9 11 12">
    <location>
        <position position="19"/>
    </location>
</feature>
<feature type="modified residue" description="Phosphoserine" evidence="8 9 11 12">
    <location>
        <position position="31"/>
    </location>
</feature>
<feature type="modified residue" description="Phosphoserine; by CaMK2 and PKA" evidence="5 8 9 11 12">
    <location>
        <position position="40"/>
    </location>
</feature>
<feature type="modified residue" description="Phosphoserine" evidence="2">
    <location>
        <position position="472"/>
    </location>
</feature>
<feature type="mutagenesis site" description="Does not affect Vmax for phenylalanine. Increases KM for phenylalanine." evidence="4">
    <original>Q</original>
    <variation>H</variation>
    <location>
        <position position="310"/>
    </location>
</feature>
<feature type="mutagenesis site" description="Does not affect Vmax for phenylalaninet. Increases KM for phenylalanine." evidence="4">
    <original>H</original>
    <variation>Y</variation>
    <location>
        <position position="323"/>
    </location>
</feature>
<feature type="mutagenesis site" description="Does not affect substrate specificity." evidence="6">
    <original>W</original>
    <variation>F</variation>
    <location>
        <position position="372"/>
    </location>
</feature>
<feature type="mutagenesis site" description="Shifts substrate specificity from tyrosine to phenylalanine." evidence="4">
    <original>D</original>
    <variation>V</variation>
    <location>
        <position position="425"/>
    </location>
</feature>
<feature type="strand" evidence="22">
    <location>
        <begin position="75"/>
        <end position="77"/>
    </location>
</feature>
<feature type="strand" evidence="22">
    <location>
        <begin position="80"/>
        <end position="85"/>
    </location>
</feature>
<feature type="strand" evidence="22">
    <location>
        <begin position="91"/>
        <end position="93"/>
    </location>
</feature>
<feature type="helix" evidence="22">
    <location>
        <begin position="98"/>
        <end position="106"/>
    </location>
</feature>
<feature type="strand" evidence="22">
    <location>
        <begin position="110"/>
        <end position="116"/>
    </location>
</feature>
<feature type="strand" evidence="22">
    <location>
        <begin position="119"/>
        <end position="122"/>
    </location>
</feature>
<feature type="strand" evidence="22">
    <location>
        <begin position="133"/>
        <end position="138"/>
    </location>
</feature>
<feature type="helix" evidence="22">
    <location>
        <begin position="141"/>
        <end position="150"/>
    </location>
</feature>
<feature type="strand" evidence="23">
    <location>
        <begin position="162"/>
        <end position="164"/>
    </location>
</feature>
<feature type="helix" evidence="21">
    <location>
        <begin position="171"/>
        <end position="176"/>
    </location>
</feature>
<feature type="strand" evidence="23">
    <location>
        <begin position="177"/>
        <end position="179"/>
    </location>
</feature>
<feature type="turn" evidence="21">
    <location>
        <begin position="193"/>
        <end position="196"/>
    </location>
</feature>
<feature type="helix" evidence="21">
    <location>
        <begin position="198"/>
        <end position="213"/>
    </location>
</feature>
<feature type="helix" evidence="21">
    <location>
        <begin position="227"/>
        <end position="247"/>
    </location>
</feature>
<feature type="helix" evidence="21">
    <location>
        <begin position="250"/>
        <end position="262"/>
    </location>
</feature>
<feature type="helix" evidence="21">
    <location>
        <begin position="273"/>
        <end position="283"/>
    </location>
</feature>
<feature type="strand" evidence="21">
    <location>
        <begin position="287"/>
        <end position="290"/>
    </location>
</feature>
<feature type="helix" evidence="21">
    <location>
        <begin position="297"/>
        <end position="304"/>
    </location>
</feature>
<feature type="turn" evidence="21">
    <location>
        <begin position="305"/>
        <end position="307"/>
    </location>
</feature>
<feature type="strand" evidence="21">
    <location>
        <begin position="308"/>
        <end position="311"/>
    </location>
</feature>
<feature type="helix" evidence="21">
    <location>
        <begin position="329"/>
        <end position="335"/>
    </location>
</feature>
<feature type="helix" evidence="21">
    <location>
        <begin position="337"/>
        <end position="340"/>
    </location>
</feature>
<feature type="helix" evidence="21">
    <location>
        <begin position="343"/>
        <end position="356"/>
    </location>
</feature>
<feature type="helix" evidence="21">
    <location>
        <begin position="361"/>
        <end position="372"/>
    </location>
</feature>
<feature type="turn" evidence="21">
    <location>
        <begin position="373"/>
        <end position="377"/>
    </location>
</feature>
<feature type="strand" evidence="21">
    <location>
        <begin position="379"/>
        <end position="382"/>
    </location>
</feature>
<feature type="strand" evidence="21">
    <location>
        <begin position="385"/>
        <end position="388"/>
    </location>
</feature>
<feature type="helix" evidence="21">
    <location>
        <begin position="391"/>
        <end position="394"/>
    </location>
</feature>
<feature type="helix" evidence="21">
    <location>
        <begin position="397"/>
        <end position="403"/>
    </location>
</feature>
<feature type="strand" evidence="21">
    <location>
        <begin position="405"/>
        <end position="412"/>
    </location>
</feature>
<feature type="helix" evidence="21">
    <location>
        <begin position="415"/>
        <end position="419"/>
    </location>
</feature>
<feature type="strand" evidence="21">
    <location>
        <begin position="425"/>
        <end position="427"/>
    </location>
</feature>
<feature type="strand" evidence="21">
    <location>
        <begin position="430"/>
        <end position="436"/>
    </location>
</feature>
<feature type="helix" evidence="21">
    <location>
        <begin position="438"/>
        <end position="450"/>
    </location>
</feature>
<feature type="strand" evidence="21">
    <location>
        <begin position="457"/>
        <end position="461"/>
    </location>
</feature>
<feature type="turn" evidence="21">
    <location>
        <begin position="462"/>
        <end position="465"/>
    </location>
</feature>
<feature type="strand" evidence="21">
    <location>
        <begin position="466"/>
        <end position="470"/>
    </location>
</feature>
<feature type="helix" evidence="21">
    <location>
        <begin position="473"/>
        <end position="496"/>
    </location>
</feature>
<organism>
    <name type="scientific">Rattus norvegicus</name>
    <name type="common">Rat</name>
    <dbReference type="NCBI Taxonomy" id="10116"/>
    <lineage>
        <taxon>Eukaryota</taxon>
        <taxon>Metazoa</taxon>
        <taxon>Chordata</taxon>
        <taxon>Craniata</taxon>
        <taxon>Vertebrata</taxon>
        <taxon>Euteleostomi</taxon>
        <taxon>Mammalia</taxon>
        <taxon>Eutheria</taxon>
        <taxon>Euarchontoglires</taxon>
        <taxon>Glires</taxon>
        <taxon>Rodentia</taxon>
        <taxon>Myomorpha</taxon>
        <taxon>Muroidea</taxon>
        <taxon>Muridae</taxon>
        <taxon>Murinae</taxon>
        <taxon>Rattus</taxon>
    </lineage>
</organism>
<accession>P04177</accession>
<proteinExistence type="evidence at protein level"/>